<organism>
    <name type="scientific">Penicillium parvum</name>
    <name type="common">Eupenicillium parvum</name>
    <dbReference type="NCBI Taxonomy" id="70113"/>
    <lineage>
        <taxon>Eukaryota</taxon>
        <taxon>Fungi</taxon>
        <taxon>Dikarya</taxon>
        <taxon>Ascomycota</taxon>
        <taxon>Pezizomycotina</taxon>
        <taxon>Eurotiomycetes</taxon>
        <taxon>Eurotiomycetidae</taxon>
        <taxon>Eurotiales</taxon>
        <taxon>Aspergillaceae</taxon>
        <taxon>Penicillium</taxon>
    </lineage>
</organism>
<feature type="signal peptide" evidence="2">
    <location>
        <begin position="1"/>
        <end position="20"/>
    </location>
</feature>
<feature type="chain" id="PRO_0000461095" description="Feruloyl esterase 1" evidence="2">
    <location>
        <begin position="21"/>
        <end position="280"/>
    </location>
</feature>
<feature type="active site" description="Nucleophile" evidence="1">
    <location>
        <position position="153"/>
    </location>
</feature>
<feature type="active site" description="Charge relay system" evidence="1">
    <location>
        <position position="214"/>
    </location>
</feature>
<feature type="active site" description="Charge relay system" evidence="1">
    <location>
        <position position="267"/>
    </location>
</feature>
<feature type="glycosylation site" description="N-linked (GlcNAc...) asparagine" evidence="3">
    <location>
        <position position="99"/>
    </location>
</feature>
<feature type="disulfide bond" evidence="1">
    <location>
        <begin position="49"/>
        <end position="278"/>
    </location>
</feature>
<feature type="disulfide bond" evidence="1">
    <location>
        <begin position="111"/>
        <end position="114"/>
    </location>
</feature>
<feature type="disulfide bond" evidence="1">
    <location>
        <begin position="247"/>
        <end position="254"/>
    </location>
</feature>
<protein>
    <recommendedName>
        <fullName evidence="6">Feruloyl esterase 1</fullName>
        <ecNumber evidence="5">3.1.1.73</ecNumber>
    </recommendedName>
    <alternativeName>
        <fullName evidence="7">Ferulic acid esterase 1</fullName>
    </alternativeName>
</protein>
<name>FAE1_PENPR</name>
<accession>A0A6C0PI29</accession>
<gene>
    <name evidence="6" type="primary">fae1</name>
</gene>
<comment type="function">
    <text evidence="4 5">Involved in degradation of plant cell walls. Hydrolyzes the feruloyl-arabinose ester bond in arabinoxylans, and the feruloyl-galactose ester bond in pectin.</text>
</comment>
<comment type="catalytic activity">
    <reaction>
        <text>feruloyl-polysaccharide + H2O = ferulate + polysaccharide.</text>
        <dbReference type="EC" id="3.1.1.73"/>
    </reaction>
</comment>
<comment type="activity regulation">
    <text evidence="5">Metal or basic ions Mn(2+), Ni(+), Mg(2+), and NH(4)(+) decrease the activity by 4.4% to 14.1%. The enzymatic activity is inhibited by Zn(2+) at a low concentration (1 mM) but not a high concentration (5 mM). Loses about a quarter of activity by the addition of 1 mM of Cu(2+) or Fe(3+) and activity is completely suppressed when the concentration was up to 5 mM. Low concentrations (0.25 and 0.5 M) of NaCl improve the activity by 5.6 % or 8.3%, respectively.</text>
</comment>
<comment type="biophysicochemical properties">
    <kinetics>
        <KM evidence="5">6.24 mM for methyl ferulate (MFA)</KM>
        <Vmax evidence="5">27.58 umol/min/mg enzyme towards methyl ferulate (MFA)</Vmax>
    </kinetics>
    <phDependence>
        <text evidence="5">Optimum pH is 5.5.</text>
    </phDependence>
    <temperatureDependence>
        <text evidence="5">Optimum temperature is 50 degrees Celsius.</text>
    </temperatureDependence>
</comment>
<comment type="subcellular location">
    <subcellularLocation>
        <location evidence="5">Secreted</location>
    </subcellularLocation>
</comment>
<comment type="PTM">
    <text evidence="5">Glycosylated.</text>
</comment>
<comment type="biotechnology">
    <text evidence="4 5">Feruloyl esterase (FAE) is a critical enzyme in bio-extraction of ferulic acid (FA) from plant cell wall (PubMed:27171788, PubMed:31792788). Synergistic action with the endo-xylanase XYN1 leads to the release of 72.32% and 4.00% of the alkali-extractable FA from de-starched wheat bran (DSWB) or de-starched corn bran (DSCB), respectively. Meanwhile, if the substrates were pretreated with 1.75% (for DSWB) or 1.0% (for DSCB) of phosphoric acid (PA) at 90 degrees Celsius for 12 h, the release efficiencies of FA were up to 84.64% for DSWB and 66.73% for DSCB. Combined dilute PA pretreatment with enzymatic hydrolysis is a low-cost and highly efficient method for the extraction of FA from cereal brans (PubMed:31792788).</text>
</comment>
<comment type="similarity">
    <text evidence="7">Belongs to the AB hydrolase superfamily. FaeA family.</text>
</comment>
<dbReference type="EC" id="3.1.1.73" evidence="5"/>
<dbReference type="EMBL" id="MK732971">
    <property type="protein sequence ID" value="QHX39618.1"/>
    <property type="molecule type" value="mRNA"/>
</dbReference>
<dbReference type="SMR" id="A0A6C0PI29"/>
<dbReference type="GO" id="GO:0005576">
    <property type="term" value="C:extracellular region"/>
    <property type="evidence" value="ECO:0007669"/>
    <property type="project" value="UniProtKB-SubCell"/>
</dbReference>
<dbReference type="GO" id="GO:0030600">
    <property type="term" value="F:feruloyl esterase activity"/>
    <property type="evidence" value="ECO:0007669"/>
    <property type="project" value="UniProtKB-EC"/>
</dbReference>
<dbReference type="GO" id="GO:0017000">
    <property type="term" value="P:antibiotic biosynthetic process"/>
    <property type="evidence" value="ECO:0007669"/>
    <property type="project" value="UniProtKB-ARBA"/>
</dbReference>
<dbReference type="GO" id="GO:0006629">
    <property type="term" value="P:lipid metabolic process"/>
    <property type="evidence" value="ECO:0007669"/>
    <property type="project" value="InterPro"/>
</dbReference>
<dbReference type="GO" id="GO:0072330">
    <property type="term" value="P:monocarboxylic acid biosynthetic process"/>
    <property type="evidence" value="ECO:0007669"/>
    <property type="project" value="UniProtKB-ARBA"/>
</dbReference>
<dbReference type="GO" id="GO:0045493">
    <property type="term" value="P:xylan catabolic process"/>
    <property type="evidence" value="ECO:0007669"/>
    <property type="project" value="UniProtKB-KW"/>
</dbReference>
<dbReference type="CDD" id="cd00519">
    <property type="entry name" value="Lipase_3"/>
    <property type="match status" value="1"/>
</dbReference>
<dbReference type="Gene3D" id="3.40.50.1820">
    <property type="entry name" value="alpha/beta hydrolase"/>
    <property type="match status" value="1"/>
</dbReference>
<dbReference type="InterPro" id="IPR029058">
    <property type="entry name" value="AB_hydrolase_fold"/>
</dbReference>
<dbReference type="InterPro" id="IPR051299">
    <property type="entry name" value="AB_hydrolase_lip/est"/>
</dbReference>
<dbReference type="InterPro" id="IPR002921">
    <property type="entry name" value="Fungal_lipase-type"/>
</dbReference>
<dbReference type="PANTHER" id="PTHR46640:SF1">
    <property type="entry name" value="FUNGAL LIPASE-LIKE DOMAIN-CONTAINING PROTEIN-RELATED"/>
    <property type="match status" value="1"/>
</dbReference>
<dbReference type="PANTHER" id="PTHR46640">
    <property type="entry name" value="TRIACYLGLYCEROL LIPASE, PUTATIVE (AFU_ORTHOLOGUE AFUA_6G06510)-RELATED"/>
    <property type="match status" value="1"/>
</dbReference>
<dbReference type="Pfam" id="PF01764">
    <property type="entry name" value="Lipase_3"/>
    <property type="match status" value="1"/>
</dbReference>
<dbReference type="SUPFAM" id="SSF53474">
    <property type="entry name" value="alpha/beta-Hydrolases"/>
    <property type="match status" value="1"/>
</dbReference>
<evidence type="ECO:0000250" key="1">
    <source>
        <dbReference type="UniProtKB" id="O42807"/>
    </source>
</evidence>
<evidence type="ECO:0000255" key="2"/>
<evidence type="ECO:0000255" key="3">
    <source>
        <dbReference type="PROSITE-ProRule" id="PRU00498"/>
    </source>
</evidence>
<evidence type="ECO:0000269" key="4">
    <source>
    </source>
</evidence>
<evidence type="ECO:0000269" key="5">
    <source>
    </source>
</evidence>
<evidence type="ECO:0000303" key="6">
    <source>
    </source>
</evidence>
<evidence type="ECO:0000305" key="7"/>
<sequence>MKAFATRALAFSVAAGQALAAVTQGVSDNTYNRLVEMATISQAAYANLCNIPATIQTVEKIYNAQTDINGWVLRDDSRQEIITVFRGTGSDTNLQLDTNYTLAPFDTLPQCVGCAVHGGYYLGWLSVQDQVQSLVQQQASQYRGYAVTVTGHSLGASMAAITAAQLSATYDNVNLYTFGEPRTGNQAYASYMNEAFDSASPETTRYFRVTHADDGIPNVPPAEQGYVHSGVEYWSVEPHSPQNTYICTGDEIQCCEAQGGQGVNAAHVTYFGMTSGACSW</sequence>
<keyword id="KW-0119">Carbohydrate metabolism</keyword>
<keyword id="KW-1015">Disulfide bond</keyword>
<keyword id="KW-0325">Glycoprotein</keyword>
<keyword id="KW-0378">Hydrolase</keyword>
<keyword id="KW-0624">Polysaccharide degradation</keyword>
<keyword id="KW-0964">Secreted</keyword>
<keyword id="KW-0719">Serine esterase</keyword>
<keyword id="KW-0732">Signal</keyword>
<keyword id="KW-0858">Xylan degradation</keyword>
<proteinExistence type="evidence at protein level"/>
<reference key="1">
    <citation type="journal article" date="2020" name="Appl. Biochem. Biotechnol.">
        <title>Highly efficient extraction of ferulic acid from cereal brans by a new type A feruloyl esterase from Eupenicillium parvum in combination with dilute phosphoric acid pretreatment.</title>
        <authorList>
            <person name="Long L."/>
            <person name="Wu L."/>
            <person name="Lin Q."/>
            <person name="Ding S."/>
        </authorList>
    </citation>
    <scope>NUCLEOTIDE SEQUENCE [MRNA]</scope>
    <scope>FUNCTION</scope>
    <scope>CATALYTIC ACTIVITY</scope>
    <scope>BIOPHYSICOCHEMICAL PROPERTIES</scope>
    <scope>ACTIVITY REGULATION</scope>
    <scope>GLYCOSYLATION</scope>
    <scope>BIOTECHNOLOGY</scope>
    <source>
        <strain>CCTCC M2015404 / 4-14</strain>
    </source>
</reference>
<reference key="2">
    <citation type="journal article" date="2016" name="J. Appl. Microbiol.">
        <title>Thermotolerant hemicellulolytic and cellulolytic enzymes from Eupenicillium parvum 4-14 display high efficiency upon release of ferulic acid from wheat bran.</title>
        <authorList>
            <person name="Long L."/>
            <person name="Ding D."/>
            <person name="Han Z."/>
            <person name="Zhao H."/>
            <person name="Lin Q."/>
            <person name="Ding S."/>
        </authorList>
    </citation>
    <scope>FUNCTION</scope>
    <scope>BIOTECHNOLOGY</scope>
</reference>